<gene>
    <name evidence="1" type="primary">queF</name>
    <name type="ordered locus">SSPA2637</name>
</gene>
<accession>B5BF23</accession>
<dbReference type="EC" id="1.7.1.13" evidence="1"/>
<dbReference type="EMBL" id="FM200053">
    <property type="protein sequence ID" value="CAR60880.1"/>
    <property type="molecule type" value="Genomic_DNA"/>
</dbReference>
<dbReference type="RefSeq" id="WP_000100472.1">
    <property type="nucleotide sequence ID" value="NC_011147.1"/>
</dbReference>
<dbReference type="SMR" id="B5BF23"/>
<dbReference type="KEGG" id="sek:SSPA2637"/>
<dbReference type="HOGENOM" id="CLU_054738_0_0_6"/>
<dbReference type="UniPathway" id="UPA00392"/>
<dbReference type="Proteomes" id="UP000001869">
    <property type="component" value="Chromosome"/>
</dbReference>
<dbReference type="GO" id="GO:0005737">
    <property type="term" value="C:cytoplasm"/>
    <property type="evidence" value="ECO:0007669"/>
    <property type="project" value="UniProtKB-SubCell"/>
</dbReference>
<dbReference type="GO" id="GO:0033739">
    <property type="term" value="F:preQ1 synthase activity"/>
    <property type="evidence" value="ECO:0007669"/>
    <property type="project" value="UniProtKB-UniRule"/>
</dbReference>
<dbReference type="GO" id="GO:0008616">
    <property type="term" value="P:queuosine biosynthetic process"/>
    <property type="evidence" value="ECO:0007669"/>
    <property type="project" value="UniProtKB-UniRule"/>
</dbReference>
<dbReference type="GO" id="GO:0006400">
    <property type="term" value="P:tRNA modification"/>
    <property type="evidence" value="ECO:0007669"/>
    <property type="project" value="UniProtKB-UniRule"/>
</dbReference>
<dbReference type="FunFam" id="3.30.1130.10:FF:000004">
    <property type="entry name" value="NADPH-dependent 7-cyano-7-deazaguanine reductase"/>
    <property type="match status" value="1"/>
</dbReference>
<dbReference type="Gene3D" id="3.30.1130.10">
    <property type="match status" value="2"/>
</dbReference>
<dbReference type="HAMAP" id="MF_00817">
    <property type="entry name" value="QueF_type2"/>
    <property type="match status" value="1"/>
</dbReference>
<dbReference type="InterPro" id="IPR043133">
    <property type="entry name" value="GTP-CH-I_C/QueF"/>
</dbReference>
<dbReference type="InterPro" id="IPR050084">
    <property type="entry name" value="NADPH_dep_7-cyano-7-deazaG_red"/>
</dbReference>
<dbReference type="InterPro" id="IPR029500">
    <property type="entry name" value="QueF"/>
</dbReference>
<dbReference type="InterPro" id="IPR029139">
    <property type="entry name" value="QueF_N"/>
</dbReference>
<dbReference type="InterPro" id="IPR016428">
    <property type="entry name" value="QueF_type2"/>
</dbReference>
<dbReference type="NCBIfam" id="TIGR03138">
    <property type="entry name" value="QueF"/>
    <property type="match status" value="1"/>
</dbReference>
<dbReference type="PANTHER" id="PTHR34354">
    <property type="entry name" value="NADPH-DEPENDENT 7-CYANO-7-DEAZAGUANINE REDUCTASE"/>
    <property type="match status" value="1"/>
</dbReference>
<dbReference type="PANTHER" id="PTHR34354:SF1">
    <property type="entry name" value="NADPH-DEPENDENT 7-CYANO-7-DEAZAGUANINE REDUCTASE"/>
    <property type="match status" value="1"/>
</dbReference>
<dbReference type="Pfam" id="PF14489">
    <property type="entry name" value="QueF"/>
    <property type="match status" value="1"/>
</dbReference>
<dbReference type="Pfam" id="PF14819">
    <property type="entry name" value="QueF_N"/>
    <property type="match status" value="1"/>
</dbReference>
<dbReference type="PIRSF" id="PIRSF004750">
    <property type="entry name" value="Nitrile_oxidored_YqcD_prd"/>
    <property type="match status" value="1"/>
</dbReference>
<dbReference type="SUPFAM" id="SSF55620">
    <property type="entry name" value="Tetrahydrobiopterin biosynthesis enzymes-like"/>
    <property type="match status" value="1"/>
</dbReference>
<sequence>MSSYENHQALDGLTLGKSTDYRDNYDVSLLQGVPRSLNRDPLGLTADNLPFHGADIWTLYELSWLNSQGLPQVAVGHVELDYTSVNLIESKSFKLYLNSFNQTRFDTWETVRQTLERDLRACAQGNVSVRLHRLDELEGQPVAHFHGACIDDQDISIDNYQFTTDYLQHAVSGEKQVEETLVSHLLKSNCLITHQPDWGSIQIQYRGRKIDREKLLRYLVSFRHHNEFHEQCVERIFNDILRFCQPETLSIYARYTRRGGLDINPWRSNTDFVPATGRLARQ</sequence>
<protein>
    <recommendedName>
        <fullName evidence="1">NADPH-dependent 7-cyano-7-deazaguanine reductase</fullName>
        <ecNumber evidence="1">1.7.1.13</ecNumber>
    </recommendedName>
    <alternativeName>
        <fullName evidence="1">7-cyano-7-carbaguanine reductase</fullName>
    </alternativeName>
    <alternativeName>
        <fullName evidence="1">NADPH-dependent nitrile oxidoreductase</fullName>
    </alternativeName>
    <alternativeName>
        <fullName evidence="1">PreQ(0) reductase</fullName>
    </alternativeName>
</protein>
<name>QUEF_SALPK</name>
<feature type="chain" id="PRO_1000213082" description="NADPH-dependent 7-cyano-7-deazaguanine reductase">
    <location>
        <begin position="1"/>
        <end position="282"/>
    </location>
</feature>
<feature type="active site" description="Thioimide intermediate" evidence="1">
    <location>
        <position position="190"/>
    </location>
</feature>
<feature type="active site" description="Proton donor" evidence="1">
    <location>
        <position position="197"/>
    </location>
</feature>
<feature type="binding site" evidence="1">
    <location>
        <begin position="88"/>
        <end position="90"/>
    </location>
    <ligand>
        <name>substrate</name>
    </ligand>
</feature>
<feature type="binding site" evidence="1">
    <location>
        <begin position="90"/>
        <end position="91"/>
    </location>
    <ligand>
        <name>NADPH</name>
        <dbReference type="ChEBI" id="CHEBI:57783"/>
    </ligand>
</feature>
<feature type="binding site" evidence="1">
    <location>
        <begin position="229"/>
        <end position="230"/>
    </location>
    <ligand>
        <name>substrate</name>
    </ligand>
</feature>
<feature type="binding site" evidence="1">
    <location>
        <begin position="258"/>
        <end position="259"/>
    </location>
    <ligand>
        <name>NADPH</name>
        <dbReference type="ChEBI" id="CHEBI:57783"/>
    </ligand>
</feature>
<keyword id="KW-0963">Cytoplasm</keyword>
<keyword id="KW-0521">NADP</keyword>
<keyword id="KW-0560">Oxidoreductase</keyword>
<keyword id="KW-0671">Queuosine biosynthesis</keyword>
<proteinExistence type="inferred from homology"/>
<reference key="1">
    <citation type="journal article" date="2009" name="BMC Genomics">
        <title>Pseudogene accumulation in the evolutionary histories of Salmonella enterica serovars Paratyphi A and Typhi.</title>
        <authorList>
            <person name="Holt K.E."/>
            <person name="Thomson N.R."/>
            <person name="Wain J."/>
            <person name="Langridge G.C."/>
            <person name="Hasan R."/>
            <person name="Bhutta Z.A."/>
            <person name="Quail M.A."/>
            <person name="Norbertczak H."/>
            <person name="Walker D."/>
            <person name="Simmonds M."/>
            <person name="White B."/>
            <person name="Bason N."/>
            <person name="Mungall K."/>
            <person name="Dougan G."/>
            <person name="Parkhill J."/>
        </authorList>
    </citation>
    <scope>NUCLEOTIDE SEQUENCE [LARGE SCALE GENOMIC DNA]</scope>
    <source>
        <strain>AKU_12601</strain>
    </source>
</reference>
<comment type="function">
    <text evidence="1">Catalyzes the NADPH-dependent reduction of 7-cyano-7-deazaguanine (preQ0) to 7-aminomethyl-7-deazaguanine (preQ1).</text>
</comment>
<comment type="catalytic activity">
    <reaction evidence="1">
        <text>7-aminomethyl-7-carbaguanine + 2 NADP(+) = 7-cyano-7-deazaguanine + 2 NADPH + 3 H(+)</text>
        <dbReference type="Rhea" id="RHEA:13409"/>
        <dbReference type="ChEBI" id="CHEBI:15378"/>
        <dbReference type="ChEBI" id="CHEBI:45075"/>
        <dbReference type="ChEBI" id="CHEBI:57783"/>
        <dbReference type="ChEBI" id="CHEBI:58349"/>
        <dbReference type="ChEBI" id="CHEBI:58703"/>
        <dbReference type="EC" id="1.7.1.13"/>
    </reaction>
</comment>
<comment type="pathway">
    <text evidence="1">tRNA modification; tRNA-queuosine biosynthesis.</text>
</comment>
<comment type="subunit">
    <text evidence="1">Homodimer.</text>
</comment>
<comment type="subcellular location">
    <subcellularLocation>
        <location evidence="1">Cytoplasm</location>
    </subcellularLocation>
</comment>
<comment type="similarity">
    <text evidence="1">Belongs to the GTP cyclohydrolase I family. QueF type 2 subfamily.</text>
</comment>
<evidence type="ECO:0000255" key="1">
    <source>
        <dbReference type="HAMAP-Rule" id="MF_00817"/>
    </source>
</evidence>
<organism>
    <name type="scientific">Salmonella paratyphi A (strain AKU_12601)</name>
    <dbReference type="NCBI Taxonomy" id="554290"/>
    <lineage>
        <taxon>Bacteria</taxon>
        <taxon>Pseudomonadati</taxon>
        <taxon>Pseudomonadota</taxon>
        <taxon>Gammaproteobacteria</taxon>
        <taxon>Enterobacterales</taxon>
        <taxon>Enterobacteriaceae</taxon>
        <taxon>Salmonella</taxon>
    </lineage>
</organism>